<dbReference type="EMBL" id="U94707">
    <property type="protein sequence ID" value="AAC45630.1"/>
    <property type="molecule type" value="Genomic_DNA"/>
</dbReference>
<dbReference type="EMBL" id="AE016830">
    <property type="protein sequence ID" value="AAO80794.1"/>
    <property type="molecule type" value="Genomic_DNA"/>
</dbReference>
<dbReference type="RefSeq" id="NP_814724.1">
    <property type="nucleotide sequence ID" value="NC_004668.1"/>
</dbReference>
<dbReference type="SMR" id="O07103"/>
<dbReference type="STRING" id="226185.EF_0988"/>
<dbReference type="EnsemblBacteria" id="AAO80794">
    <property type="protein sequence ID" value="AAO80794"/>
    <property type="gene ID" value="EF_0988"/>
</dbReference>
<dbReference type="KEGG" id="efa:EF0988"/>
<dbReference type="PATRIC" id="fig|226185.45.peg.3194"/>
<dbReference type="eggNOG" id="COG2001">
    <property type="taxonomic scope" value="Bacteria"/>
</dbReference>
<dbReference type="HOGENOM" id="CLU_107907_0_5_9"/>
<dbReference type="Proteomes" id="UP000001415">
    <property type="component" value="Chromosome"/>
</dbReference>
<dbReference type="GO" id="GO:0005737">
    <property type="term" value="C:cytoplasm"/>
    <property type="evidence" value="ECO:0007669"/>
    <property type="project" value="UniProtKB-UniRule"/>
</dbReference>
<dbReference type="GO" id="GO:0009295">
    <property type="term" value="C:nucleoid"/>
    <property type="evidence" value="ECO:0007669"/>
    <property type="project" value="UniProtKB-SubCell"/>
</dbReference>
<dbReference type="GO" id="GO:0003700">
    <property type="term" value="F:DNA-binding transcription factor activity"/>
    <property type="evidence" value="ECO:0007669"/>
    <property type="project" value="UniProtKB-UniRule"/>
</dbReference>
<dbReference type="GO" id="GO:0000976">
    <property type="term" value="F:transcription cis-regulatory region binding"/>
    <property type="evidence" value="ECO:0007669"/>
    <property type="project" value="TreeGrafter"/>
</dbReference>
<dbReference type="GO" id="GO:2000143">
    <property type="term" value="P:negative regulation of DNA-templated transcription initiation"/>
    <property type="evidence" value="ECO:0007669"/>
    <property type="project" value="TreeGrafter"/>
</dbReference>
<dbReference type="CDD" id="cd16321">
    <property type="entry name" value="MraZ_C"/>
    <property type="match status" value="1"/>
</dbReference>
<dbReference type="CDD" id="cd16320">
    <property type="entry name" value="MraZ_N"/>
    <property type="match status" value="1"/>
</dbReference>
<dbReference type="FunFam" id="3.40.1550.20:FF:000002">
    <property type="entry name" value="Transcriptional regulator MraZ"/>
    <property type="match status" value="1"/>
</dbReference>
<dbReference type="Gene3D" id="3.40.1550.20">
    <property type="entry name" value="Transcriptional regulator MraZ domain"/>
    <property type="match status" value="1"/>
</dbReference>
<dbReference type="HAMAP" id="MF_01008">
    <property type="entry name" value="MraZ"/>
    <property type="match status" value="1"/>
</dbReference>
<dbReference type="InterPro" id="IPR003444">
    <property type="entry name" value="MraZ"/>
</dbReference>
<dbReference type="InterPro" id="IPR035644">
    <property type="entry name" value="MraZ_C"/>
</dbReference>
<dbReference type="InterPro" id="IPR020603">
    <property type="entry name" value="MraZ_dom"/>
</dbReference>
<dbReference type="InterPro" id="IPR035642">
    <property type="entry name" value="MraZ_N"/>
</dbReference>
<dbReference type="InterPro" id="IPR038619">
    <property type="entry name" value="MraZ_sf"/>
</dbReference>
<dbReference type="InterPro" id="IPR007159">
    <property type="entry name" value="SpoVT-AbrB_dom"/>
</dbReference>
<dbReference type="InterPro" id="IPR037914">
    <property type="entry name" value="SpoVT-AbrB_sf"/>
</dbReference>
<dbReference type="NCBIfam" id="TIGR00242">
    <property type="entry name" value="division/cell wall cluster transcriptional repressor MraZ"/>
    <property type="match status" value="1"/>
</dbReference>
<dbReference type="PANTHER" id="PTHR34701">
    <property type="entry name" value="TRANSCRIPTIONAL REGULATOR MRAZ"/>
    <property type="match status" value="1"/>
</dbReference>
<dbReference type="PANTHER" id="PTHR34701:SF1">
    <property type="entry name" value="TRANSCRIPTIONAL REGULATOR MRAZ"/>
    <property type="match status" value="1"/>
</dbReference>
<dbReference type="Pfam" id="PF02381">
    <property type="entry name" value="MraZ"/>
    <property type="match status" value="2"/>
</dbReference>
<dbReference type="SUPFAM" id="SSF89447">
    <property type="entry name" value="AbrB/MazE/MraZ-like"/>
    <property type="match status" value="1"/>
</dbReference>
<dbReference type="PROSITE" id="PS51740">
    <property type="entry name" value="SPOVT_ABRB"/>
    <property type="match status" value="2"/>
</dbReference>
<reference key="1">
    <citation type="journal article" date="1997" name="J. Bacteriol.">
        <title>Identification and characterization of cell wall-cell division gene clusters in pathogenic Gram-positive cocci.</title>
        <authorList>
            <person name="Pucci M.J."/>
            <person name="Thanassi J.A."/>
            <person name="Discotto L.F."/>
            <person name="Kessler R.E."/>
            <person name="Dougherty T.J."/>
        </authorList>
    </citation>
    <scope>NUCLEOTIDE SEQUENCE [GENOMIC DNA]</scope>
    <source>
        <strain>A24836</strain>
    </source>
</reference>
<reference key="2">
    <citation type="journal article" date="2003" name="Science">
        <title>Role of mobile DNA in the evolution of vancomycin-resistant Enterococcus faecalis.</title>
        <authorList>
            <person name="Paulsen I.T."/>
            <person name="Banerjei L."/>
            <person name="Myers G.S.A."/>
            <person name="Nelson K.E."/>
            <person name="Seshadri R."/>
            <person name="Read T.D."/>
            <person name="Fouts D.E."/>
            <person name="Eisen J.A."/>
            <person name="Gill S.R."/>
            <person name="Heidelberg J.F."/>
            <person name="Tettelin H."/>
            <person name="Dodson R.J."/>
            <person name="Umayam L.A."/>
            <person name="Brinkac L.M."/>
            <person name="Beanan M.J."/>
            <person name="Daugherty S.C."/>
            <person name="DeBoy R.T."/>
            <person name="Durkin S.A."/>
            <person name="Kolonay J.F."/>
            <person name="Madupu R."/>
            <person name="Nelson W.C."/>
            <person name="Vamathevan J.J."/>
            <person name="Tran B."/>
            <person name="Upton J."/>
            <person name="Hansen T."/>
            <person name="Shetty J."/>
            <person name="Khouri H.M."/>
            <person name="Utterback T.R."/>
            <person name="Radune D."/>
            <person name="Ketchum K.A."/>
            <person name="Dougherty B.A."/>
            <person name="Fraser C.M."/>
        </authorList>
    </citation>
    <scope>NUCLEOTIDE SEQUENCE [LARGE SCALE GENOMIC DNA]</scope>
    <source>
        <strain>ATCC 700802 / V583</strain>
    </source>
</reference>
<accession>O07103</accession>
<protein>
    <recommendedName>
        <fullName>Transcriptional regulator MraZ</fullName>
    </recommendedName>
</protein>
<name>MRAZ_ENTFA</name>
<sequence>MLMGEYQHNIDAKGRLIVPSKFREELGEKFVVTRGMDGCLFGYPLNEWSQLEAKLQEMPLAKKDARTFVRFFYSAATECEIDKQGRINIPANLRTHASLEKGCVVIGVSNRIEIWSDERWHAFSDEAEENFDELAETMIDFGF</sequence>
<feature type="chain" id="PRO_0000108482" description="Transcriptional regulator MraZ">
    <location>
        <begin position="1"/>
        <end position="143"/>
    </location>
</feature>
<feature type="domain" description="SpoVT-AbrB 1" evidence="2">
    <location>
        <begin position="5"/>
        <end position="47"/>
    </location>
</feature>
<feature type="domain" description="SpoVT-AbrB 2" evidence="2">
    <location>
        <begin position="76"/>
        <end position="119"/>
    </location>
</feature>
<feature type="sequence conflict" description="In Ref. 1; AAC45630." evidence="3" ref="1">
    <original>R</original>
    <variation>G</variation>
    <location>
        <position position="111"/>
    </location>
</feature>
<gene>
    <name evidence="1" type="primary">mraZ</name>
    <name type="ordered locus">EF_0988</name>
</gene>
<comment type="subunit">
    <text evidence="1">Forms oligomers.</text>
</comment>
<comment type="subcellular location">
    <subcellularLocation>
        <location evidence="1">Cytoplasm</location>
        <location evidence="1">Nucleoid</location>
    </subcellularLocation>
</comment>
<comment type="similarity">
    <text evidence="1">Belongs to the MraZ family.</text>
</comment>
<evidence type="ECO:0000255" key="1">
    <source>
        <dbReference type="HAMAP-Rule" id="MF_01008"/>
    </source>
</evidence>
<evidence type="ECO:0000255" key="2">
    <source>
        <dbReference type="PROSITE-ProRule" id="PRU01076"/>
    </source>
</evidence>
<evidence type="ECO:0000305" key="3"/>
<keyword id="KW-0963">Cytoplasm</keyword>
<keyword id="KW-0238">DNA-binding</keyword>
<keyword id="KW-1185">Reference proteome</keyword>
<keyword id="KW-0677">Repeat</keyword>
<keyword id="KW-0804">Transcription</keyword>
<keyword id="KW-0805">Transcription regulation</keyword>
<organism>
    <name type="scientific">Enterococcus faecalis (strain ATCC 700802 / V583)</name>
    <dbReference type="NCBI Taxonomy" id="226185"/>
    <lineage>
        <taxon>Bacteria</taxon>
        <taxon>Bacillati</taxon>
        <taxon>Bacillota</taxon>
        <taxon>Bacilli</taxon>
        <taxon>Lactobacillales</taxon>
        <taxon>Enterococcaceae</taxon>
        <taxon>Enterococcus</taxon>
    </lineage>
</organism>
<proteinExistence type="inferred from homology"/>